<name>P4K2A_DANRE</name>
<gene>
    <name type="primary">pi4k2a</name>
    <name type="synonym">pi4kii</name>
    <name type="ORF">si:ch211-197k17.1</name>
</gene>
<evidence type="ECO:0000250" key="1"/>
<evidence type="ECO:0000250" key="2">
    <source>
        <dbReference type="UniProtKB" id="Q2TBE6"/>
    </source>
</evidence>
<evidence type="ECO:0000250" key="3">
    <source>
        <dbReference type="UniProtKB" id="Q99M64"/>
    </source>
</evidence>
<evidence type="ECO:0000250" key="4">
    <source>
        <dbReference type="UniProtKB" id="Q9BTU6"/>
    </source>
</evidence>
<evidence type="ECO:0000255" key="5">
    <source>
        <dbReference type="PROSITE-ProRule" id="PRU00269"/>
    </source>
</evidence>
<evidence type="ECO:0000256" key="6">
    <source>
        <dbReference type="SAM" id="MobiDB-lite"/>
    </source>
</evidence>
<evidence type="ECO:0000305" key="7"/>
<accession>Q6PE18</accession>
<accession>A5PF25</accession>
<accession>Q52PF3</accession>
<sequence>MDETSPLVSPLRDSNDFNYGPAEPTSPRGGFGSTPGSVVRLPAGSPGRSRERQPLLDRDRGASPRDPHRNEFPEDPEFREIIRKAERAIEEGIYPERIYQGSSGSYFVKDSAGKIIGVFKPKNEEPYGQLNPKWTKWLQKLCCPCCFGRDCLVLNQGYLSEAGASLVDQKLELNIVPRTKVVYLASETFNYSAIDRVKSRGKRLALEKVPKVGQRFHRIGLPPKVGSFQIFVEGYKDADFWLRRFEAEPLPENTNRQLQLQFERLVVLDYIIRNTDRGNDNWLIKYDYPMDTSSNRDSDWVLVKDPIIKLAAIDNGLAFPLKHPDSWRAYPFYWAWLPQAKVVFSQEIRDLVLPKLADPNFIKDLEEDLYELFKKDPGFDRGQFKKQVSVMRGQILNLSQAMRDGKTPLQLVQMPPVIVETARVPQRANSESYTQSFQSRRPFFTWW</sequence>
<protein>
    <recommendedName>
        <fullName>Phosphatidylinositol 4-kinase type 2-alpha</fullName>
        <ecNumber evidence="4">2.7.1.67</ecNumber>
    </recommendedName>
    <alternativeName>
        <fullName>Phosphatidylinositol 4-kinase type II-alpha</fullName>
    </alternativeName>
</protein>
<reference key="1">
    <citation type="submission" date="2005-02" db="EMBL/GenBank/DDBJ databases">
        <title>Phosphatidylinositol 4-kinases of Danio rerio.</title>
        <authorList>
            <person name="Ma H."/>
            <person name="Balla T."/>
        </authorList>
    </citation>
    <scope>NUCLEOTIDE SEQUENCE [MRNA]</scope>
</reference>
<reference key="2">
    <citation type="journal article" date="2013" name="Nature">
        <title>The zebrafish reference genome sequence and its relationship to the human genome.</title>
        <authorList>
            <person name="Howe K."/>
            <person name="Clark M.D."/>
            <person name="Torroja C.F."/>
            <person name="Torrance J."/>
            <person name="Berthelot C."/>
            <person name="Muffato M."/>
            <person name="Collins J.E."/>
            <person name="Humphray S."/>
            <person name="McLaren K."/>
            <person name="Matthews L."/>
            <person name="McLaren S."/>
            <person name="Sealy I."/>
            <person name="Caccamo M."/>
            <person name="Churcher C."/>
            <person name="Scott C."/>
            <person name="Barrett J.C."/>
            <person name="Koch R."/>
            <person name="Rauch G.J."/>
            <person name="White S."/>
            <person name="Chow W."/>
            <person name="Kilian B."/>
            <person name="Quintais L.T."/>
            <person name="Guerra-Assuncao J.A."/>
            <person name="Zhou Y."/>
            <person name="Gu Y."/>
            <person name="Yen J."/>
            <person name="Vogel J.H."/>
            <person name="Eyre T."/>
            <person name="Redmond S."/>
            <person name="Banerjee R."/>
            <person name="Chi J."/>
            <person name="Fu B."/>
            <person name="Langley E."/>
            <person name="Maguire S.F."/>
            <person name="Laird G.K."/>
            <person name="Lloyd D."/>
            <person name="Kenyon E."/>
            <person name="Donaldson S."/>
            <person name="Sehra H."/>
            <person name="Almeida-King J."/>
            <person name="Loveland J."/>
            <person name="Trevanion S."/>
            <person name="Jones M."/>
            <person name="Quail M."/>
            <person name="Willey D."/>
            <person name="Hunt A."/>
            <person name="Burton J."/>
            <person name="Sims S."/>
            <person name="McLay K."/>
            <person name="Plumb B."/>
            <person name="Davis J."/>
            <person name="Clee C."/>
            <person name="Oliver K."/>
            <person name="Clark R."/>
            <person name="Riddle C."/>
            <person name="Elliot D."/>
            <person name="Threadgold G."/>
            <person name="Harden G."/>
            <person name="Ware D."/>
            <person name="Begum S."/>
            <person name="Mortimore B."/>
            <person name="Kerry G."/>
            <person name="Heath P."/>
            <person name="Phillimore B."/>
            <person name="Tracey A."/>
            <person name="Corby N."/>
            <person name="Dunn M."/>
            <person name="Johnson C."/>
            <person name="Wood J."/>
            <person name="Clark S."/>
            <person name="Pelan S."/>
            <person name="Griffiths G."/>
            <person name="Smith M."/>
            <person name="Glithero R."/>
            <person name="Howden P."/>
            <person name="Barker N."/>
            <person name="Lloyd C."/>
            <person name="Stevens C."/>
            <person name="Harley J."/>
            <person name="Holt K."/>
            <person name="Panagiotidis G."/>
            <person name="Lovell J."/>
            <person name="Beasley H."/>
            <person name="Henderson C."/>
            <person name="Gordon D."/>
            <person name="Auger K."/>
            <person name="Wright D."/>
            <person name="Collins J."/>
            <person name="Raisen C."/>
            <person name="Dyer L."/>
            <person name="Leung K."/>
            <person name="Robertson L."/>
            <person name="Ambridge K."/>
            <person name="Leongamornlert D."/>
            <person name="McGuire S."/>
            <person name="Gilderthorp R."/>
            <person name="Griffiths C."/>
            <person name="Manthravadi D."/>
            <person name="Nichol S."/>
            <person name="Barker G."/>
            <person name="Whitehead S."/>
            <person name="Kay M."/>
            <person name="Brown J."/>
            <person name="Murnane C."/>
            <person name="Gray E."/>
            <person name="Humphries M."/>
            <person name="Sycamore N."/>
            <person name="Barker D."/>
            <person name="Saunders D."/>
            <person name="Wallis J."/>
            <person name="Babbage A."/>
            <person name="Hammond S."/>
            <person name="Mashreghi-Mohammadi M."/>
            <person name="Barr L."/>
            <person name="Martin S."/>
            <person name="Wray P."/>
            <person name="Ellington A."/>
            <person name="Matthews N."/>
            <person name="Ellwood M."/>
            <person name="Woodmansey R."/>
            <person name="Clark G."/>
            <person name="Cooper J."/>
            <person name="Tromans A."/>
            <person name="Grafham D."/>
            <person name="Skuce C."/>
            <person name="Pandian R."/>
            <person name="Andrews R."/>
            <person name="Harrison E."/>
            <person name="Kimberley A."/>
            <person name="Garnett J."/>
            <person name="Fosker N."/>
            <person name="Hall R."/>
            <person name="Garner P."/>
            <person name="Kelly D."/>
            <person name="Bird C."/>
            <person name="Palmer S."/>
            <person name="Gehring I."/>
            <person name="Berger A."/>
            <person name="Dooley C.M."/>
            <person name="Ersan-Urun Z."/>
            <person name="Eser C."/>
            <person name="Geiger H."/>
            <person name="Geisler M."/>
            <person name="Karotki L."/>
            <person name="Kirn A."/>
            <person name="Konantz J."/>
            <person name="Konantz M."/>
            <person name="Oberlander M."/>
            <person name="Rudolph-Geiger S."/>
            <person name="Teucke M."/>
            <person name="Lanz C."/>
            <person name="Raddatz G."/>
            <person name="Osoegawa K."/>
            <person name="Zhu B."/>
            <person name="Rapp A."/>
            <person name="Widaa S."/>
            <person name="Langford C."/>
            <person name="Yang F."/>
            <person name="Schuster S.C."/>
            <person name="Carter N.P."/>
            <person name="Harrow J."/>
            <person name="Ning Z."/>
            <person name="Herrero J."/>
            <person name="Searle S.M."/>
            <person name="Enright A."/>
            <person name="Geisler R."/>
            <person name="Plasterk R.H."/>
            <person name="Lee C."/>
            <person name="Westerfield M."/>
            <person name="de Jong P.J."/>
            <person name="Zon L.I."/>
            <person name="Postlethwait J.H."/>
            <person name="Nusslein-Volhard C."/>
            <person name="Hubbard T.J."/>
            <person name="Roest Crollius H."/>
            <person name="Rogers J."/>
            <person name="Stemple D.L."/>
        </authorList>
    </citation>
    <scope>NUCLEOTIDE SEQUENCE [LARGE SCALE GENOMIC DNA]</scope>
    <source>
        <strain>Tuebingen</strain>
    </source>
</reference>
<reference key="3">
    <citation type="submission" date="2003-09" db="EMBL/GenBank/DDBJ databases">
        <authorList>
            <consortium name="NIH - Zebrafish Gene Collection (ZGC) project"/>
        </authorList>
    </citation>
    <scope>NUCLEOTIDE SEQUENCE [LARGE SCALE MRNA]</scope>
    <source>
        <strain>SJD</strain>
    </source>
</reference>
<reference key="4">
    <citation type="submission" date="2005-03" db="EMBL/GenBank/DDBJ databases">
        <title>Cloning of Danio rerio phosphatidylinositol 4-kinase type II partial cDNA.</title>
        <authorList>
            <person name="Rafael M.S."/>
            <person name="Laize V."/>
            <person name="Cancela M.L."/>
        </authorList>
    </citation>
    <scope>NUCLEOTIDE SEQUENCE [MRNA] OF 105-447</scope>
</reference>
<proteinExistence type="evidence at transcript level"/>
<dbReference type="EC" id="2.7.1.67" evidence="4"/>
<dbReference type="EMBL" id="AY929290">
    <property type="protein sequence ID" value="AAY16565.1"/>
    <property type="molecule type" value="mRNA"/>
</dbReference>
<dbReference type="EMBL" id="AL929041">
    <property type="protein sequence ID" value="CAN88146.1"/>
    <property type="molecule type" value="Genomic_DNA"/>
</dbReference>
<dbReference type="EMBL" id="BX119918">
    <property type="protein sequence ID" value="CAN88146.1"/>
    <property type="status" value="JOINED"/>
    <property type="molecule type" value="Genomic_DNA"/>
</dbReference>
<dbReference type="EMBL" id="BC058342">
    <property type="protein sequence ID" value="AAH58342.1"/>
    <property type="molecule type" value="mRNA"/>
</dbReference>
<dbReference type="EMBL" id="AY989909">
    <property type="protein sequence ID" value="AAX89135.1"/>
    <property type="molecule type" value="mRNA"/>
</dbReference>
<dbReference type="RefSeq" id="NP_998523.1">
    <property type="nucleotide sequence ID" value="NM_213358.2"/>
</dbReference>
<dbReference type="SMR" id="Q6PE18"/>
<dbReference type="FunCoup" id="Q6PE18">
    <property type="interactions" value="2276"/>
</dbReference>
<dbReference type="STRING" id="7955.ENSDARP00000112458"/>
<dbReference type="PaxDb" id="7955-ENSDARP00000112458"/>
<dbReference type="Ensembl" id="ENSDART00000130675">
    <property type="protein sequence ID" value="ENSDARP00000112458"/>
    <property type="gene ID" value="ENSDARG00000033666"/>
</dbReference>
<dbReference type="Ensembl" id="ENSDART00000162075">
    <property type="protein sequence ID" value="ENSDARP00000140323"/>
    <property type="gene ID" value="ENSDARG00000033666"/>
</dbReference>
<dbReference type="GeneID" id="406667"/>
<dbReference type="KEGG" id="dre:406667"/>
<dbReference type="AGR" id="ZFIN:ZDB-GENE-040426-2675"/>
<dbReference type="CTD" id="55361"/>
<dbReference type="ZFIN" id="ZDB-GENE-040426-2675">
    <property type="gene designation" value="pi4k2a"/>
</dbReference>
<dbReference type="eggNOG" id="KOG2381">
    <property type="taxonomic scope" value="Eukaryota"/>
</dbReference>
<dbReference type="HOGENOM" id="CLU_032516_1_0_1"/>
<dbReference type="InParanoid" id="Q6PE18"/>
<dbReference type="OMA" id="IKCDCPL"/>
<dbReference type="OrthoDB" id="3349449at2759"/>
<dbReference type="PhylomeDB" id="Q6PE18"/>
<dbReference type="TreeFam" id="TF314740"/>
<dbReference type="Reactome" id="R-DRE-1660499">
    <property type="pathway name" value="Synthesis of PIPs at the plasma membrane"/>
</dbReference>
<dbReference type="Reactome" id="R-DRE-1660514">
    <property type="pathway name" value="Synthesis of PIPs at the Golgi membrane"/>
</dbReference>
<dbReference type="Reactome" id="R-DRE-1660516">
    <property type="pathway name" value="Synthesis of PIPs at the early endosome membrane"/>
</dbReference>
<dbReference type="PRO" id="PR:Q6PE18"/>
<dbReference type="Proteomes" id="UP000000437">
    <property type="component" value="Chromosome 1"/>
</dbReference>
<dbReference type="Bgee" id="ENSDARG00000033666">
    <property type="expression patterns" value="Expressed in mature ovarian follicle and 25 other cell types or tissues"/>
</dbReference>
<dbReference type="GO" id="GO:0031410">
    <property type="term" value="C:cytoplasmic vesicle"/>
    <property type="evidence" value="ECO:0000250"/>
    <property type="project" value="UniProtKB"/>
</dbReference>
<dbReference type="GO" id="GO:0030425">
    <property type="term" value="C:dendrite"/>
    <property type="evidence" value="ECO:0000250"/>
    <property type="project" value="UniProtKB"/>
</dbReference>
<dbReference type="GO" id="GO:0005768">
    <property type="term" value="C:endosome"/>
    <property type="evidence" value="ECO:0000250"/>
    <property type="project" value="UniProtKB"/>
</dbReference>
<dbReference type="GO" id="GO:0035838">
    <property type="term" value="C:growing cell tip"/>
    <property type="evidence" value="ECO:0000250"/>
    <property type="project" value="UniProtKB"/>
</dbReference>
<dbReference type="GO" id="GO:0016020">
    <property type="term" value="C:membrane"/>
    <property type="evidence" value="ECO:0000250"/>
    <property type="project" value="UniProtKB"/>
</dbReference>
<dbReference type="GO" id="GO:0045121">
    <property type="term" value="C:membrane raft"/>
    <property type="evidence" value="ECO:0000250"/>
    <property type="project" value="UniProtKB"/>
</dbReference>
<dbReference type="GO" id="GO:0005739">
    <property type="term" value="C:mitochondrion"/>
    <property type="evidence" value="ECO:0000250"/>
    <property type="project" value="UniProtKB"/>
</dbReference>
<dbReference type="GO" id="GO:0043005">
    <property type="term" value="C:neuron projection"/>
    <property type="evidence" value="ECO:0000250"/>
    <property type="project" value="UniProtKB"/>
</dbReference>
<dbReference type="GO" id="GO:0043025">
    <property type="term" value="C:neuronal cell body"/>
    <property type="evidence" value="ECO:0000250"/>
    <property type="project" value="UniProtKB"/>
</dbReference>
<dbReference type="GO" id="GO:0043204">
    <property type="term" value="C:perikaryon"/>
    <property type="evidence" value="ECO:0007669"/>
    <property type="project" value="UniProtKB-SubCell"/>
</dbReference>
<dbReference type="GO" id="GO:0005886">
    <property type="term" value="C:plasma membrane"/>
    <property type="evidence" value="ECO:0000250"/>
    <property type="project" value="UniProtKB"/>
</dbReference>
<dbReference type="GO" id="GO:0042734">
    <property type="term" value="C:presynaptic membrane"/>
    <property type="evidence" value="ECO:0000250"/>
    <property type="project" value="UniProtKB"/>
</dbReference>
<dbReference type="GO" id="GO:0005802">
    <property type="term" value="C:trans-Golgi network"/>
    <property type="evidence" value="ECO:0000318"/>
    <property type="project" value="GO_Central"/>
</dbReference>
<dbReference type="GO" id="GO:0004430">
    <property type="term" value="F:1-phosphatidylinositol 4-kinase activity"/>
    <property type="evidence" value="ECO:0000250"/>
    <property type="project" value="UniProtKB"/>
</dbReference>
<dbReference type="GO" id="GO:0035651">
    <property type="term" value="F:AP-3 adaptor complex binding"/>
    <property type="evidence" value="ECO:0000250"/>
    <property type="project" value="UniProtKB"/>
</dbReference>
<dbReference type="GO" id="GO:0005524">
    <property type="term" value="F:ATP binding"/>
    <property type="evidence" value="ECO:0000250"/>
    <property type="project" value="UniProtKB"/>
</dbReference>
<dbReference type="GO" id="GO:0007032">
    <property type="term" value="P:endosome organization"/>
    <property type="evidence" value="ECO:0000318"/>
    <property type="project" value="GO_Central"/>
</dbReference>
<dbReference type="GO" id="GO:0007030">
    <property type="term" value="P:Golgi organization"/>
    <property type="evidence" value="ECO:0000318"/>
    <property type="project" value="GO_Central"/>
</dbReference>
<dbReference type="GO" id="GO:0006661">
    <property type="term" value="P:phosphatidylinositol biosynthetic process"/>
    <property type="evidence" value="ECO:0000250"/>
    <property type="project" value="UniProtKB"/>
</dbReference>
<dbReference type="GO" id="GO:0046854">
    <property type="term" value="P:phosphatidylinositol phosphate biosynthetic process"/>
    <property type="evidence" value="ECO:0000250"/>
    <property type="project" value="UniProtKB"/>
</dbReference>
<dbReference type="InterPro" id="IPR039756">
    <property type="entry name" value="Lsb6/PI4K2"/>
</dbReference>
<dbReference type="InterPro" id="IPR000403">
    <property type="entry name" value="PI3/4_kinase_cat_dom"/>
</dbReference>
<dbReference type="PANTHER" id="PTHR12865:SF7">
    <property type="entry name" value="PHOSPHATIDYLINOSITOL 4-KINASE TYPE 2-ALPHA"/>
    <property type="match status" value="1"/>
</dbReference>
<dbReference type="PANTHER" id="PTHR12865">
    <property type="entry name" value="PHOSPHATIDYLINOSITOL 4-KINASE TYPE-II"/>
    <property type="match status" value="1"/>
</dbReference>
<dbReference type="Pfam" id="PF00454">
    <property type="entry name" value="PI3_PI4_kinase"/>
    <property type="match status" value="1"/>
</dbReference>
<dbReference type="SUPFAM" id="SSF56399">
    <property type="entry name" value="ADP-ribosylation"/>
    <property type="match status" value="1"/>
</dbReference>
<dbReference type="PROSITE" id="PS50290">
    <property type="entry name" value="PI3_4_KINASE_3"/>
    <property type="match status" value="1"/>
</dbReference>
<organism>
    <name type="scientific">Danio rerio</name>
    <name type="common">Zebrafish</name>
    <name type="synonym">Brachydanio rerio</name>
    <dbReference type="NCBI Taxonomy" id="7955"/>
    <lineage>
        <taxon>Eukaryota</taxon>
        <taxon>Metazoa</taxon>
        <taxon>Chordata</taxon>
        <taxon>Craniata</taxon>
        <taxon>Vertebrata</taxon>
        <taxon>Euteleostomi</taxon>
        <taxon>Actinopterygii</taxon>
        <taxon>Neopterygii</taxon>
        <taxon>Teleostei</taxon>
        <taxon>Ostariophysi</taxon>
        <taxon>Cypriniformes</taxon>
        <taxon>Danionidae</taxon>
        <taxon>Danioninae</taxon>
        <taxon>Danio</taxon>
    </lineage>
</organism>
<feature type="chain" id="PRO_0000285161" description="Phosphatidylinositol 4-kinase type 2-alpha">
    <location>
        <begin position="1"/>
        <end position="447"/>
    </location>
</feature>
<feature type="domain" description="PI3K/PI4K catalytic" evidence="5">
    <location>
        <begin position="92"/>
        <end position="421"/>
    </location>
</feature>
<feature type="region of interest" description="Disordered" evidence="6">
    <location>
        <begin position="1"/>
        <end position="77"/>
    </location>
</feature>
<feature type="region of interest" description="G-loop" evidence="5">
    <location>
        <begin position="98"/>
        <end position="104"/>
    </location>
</feature>
<feature type="region of interest" description="Important for substrate binding" evidence="4">
    <location>
        <begin position="125"/>
        <end position="127"/>
    </location>
</feature>
<feature type="region of interest" description="Important for interaction with membranes" evidence="4">
    <location>
        <begin position="133"/>
        <end position="146"/>
    </location>
</feature>
<feature type="region of interest" description="Important for interaction with membranes" evidence="4">
    <location>
        <begin position="236"/>
        <end position="244"/>
    </location>
</feature>
<feature type="region of interest" description="Catalytic loop" evidence="5">
    <location>
        <begin position="273"/>
        <end position="281"/>
    </location>
</feature>
<feature type="region of interest" description="Activation loop" evidence="5">
    <location>
        <begin position="312"/>
        <end position="332"/>
    </location>
</feature>
<feature type="region of interest" description="Important for interaction with membranes" evidence="4">
    <location>
        <begin position="327"/>
        <end position="336"/>
    </location>
</feature>
<feature type="compositionally biased region" description="Basic and acidic residues" evidence="6">
    <location>
        <begin position="48"/>
        <end position="77"/>
    </location>
</feature>
<feature type="binding site" evidence="4">
    <location>
        <begin position="99"/>
        <end position="105"/>
    </location>
    <ligand>
        <name>ATP</name>
        <dbReference type="ChEBI" id="CHEBI:30616"/>
    </ligand>
</feature>
<feature type="binding site" evidence="4">
    <location>
        <position position="120"/>
    </location>
    <ligand>
        <name>ATP</name>
        <dbReference type="ChEBI" id="CHEBI:30616"/>
    </ligand>
</feature>
<feature type="binding site" evidence="4">
    <location>
        <begin position="229"/>
        <end position="232"/>
    </location>
    <ligand>
        <name>ATP</name>
        <dbReference type="ChEBI" id="CHEBI:30616"/>
    </ligand>
</feature>
<feature type="binding site" evidence="4">
    <location>
        <position position="314"/>
    </location>
    <ligand>
        <name>ATP</name>
        <dbReference type="ChEBI" id="CHEBI:30616"/>
    </ligand>
</feature>
<feature type="lipid moiety-binding region" description="S-palmitoyl cysteine" evidence="1">
    <location>
        <position position="142"/>
    </location>
</feature>
<feature type="lipid moiety-binding region" description="S-palmitoyl cysteine" evidence="1">
    <location>
        <position position="143"/>
    </location>
</feature>
<feature type="lipid moiety-binding region" description="S-palmitoyl cysteine" evidence="1">
    <location>
        <position position="145"/>
    </location>
</feature>
<feature type="lipid moiety-binding region" description="S-palmitoyl cysteine" evidence="1">
    <location>
        <position position="146"/>
    </location>
</feature>
<feature type="sequence conflict" description="In Ref. 4; AAX89135." evidence="7" ref="4">
    <original>N</original>
    <variation>S</variation>
    <location>
        <position position="255"/>
    </location>
</feature>
<keyword id="KW-0067">ATP-binding</keyword>
<keyword id="KW-1003">Cell membrane</keyword>
<keyword id="KW-0966">Cell projection</keyword>
<keyword id="KW-0968">Cytoplasmic vesicle</keyword>
<keyword id="KW-0967">Endosome</keyword>
<keyword id="KW-0333">Golgi apparatus</keyword>
<keyword id="KW-0418">Kinase</keyword>
<keyword id="KW-0443">Lipid metabolism</keyword>
<keyword id="KW-0449">Lipoprotein</keyword>
<keyword id="KW-0472">Membrane</keyword>
<keyword id="KW-0496">Mitochondrion</keyword>
<keyword id="KW-0547">Nucleotide-binding</keyword>
<keyword id="KW-0564">Palmitate</keyword>
<keyword id="KW-0597">Phosphoprotein</keyword>
<keyword id="KW-1185">Reference proteome</keyword>
<keyword id="KW-0770">Synapse</keyword>
<keyword id="KW-0771">Synaptosome</keyword>
<keyword id="KW-0808">Transferase</keyword>
<comment type="function">
    <text evidence="4">Membrane-bound phosphatidylinositol-4 kinase (PI4-kinase) that catalyzes the phosphorylation of phosphatidylinositol (PI) to phosphatidylinositol 4-phosphate (PI4P), a lipid that plays important roles in endocytosis, Golgi function, protein sorting and membrane trafficking. Besides, phosphorylation of phosphatidylinositol (PI) to phosphatidylinositol 4-phosphate (PI4P) is the first committed step in the generation of phosphatidylinositol 4,5-bisphosphate (PIP2), a precursor of the second messenger inositol 1,4,5-trisphosphate (InsP3).</text>
</comment>
<comment type="catalytic activity">
    <reaction evidence="4">
        <text>a 1,2-diacyl-sn-glycero-3-phospho-(1D-myo-inositol) + ATP = a 1,2-diacyl-sn-glycero-3-phospho-(1D-myo-inositol 4-phosphate) + ADP + H(+)</text>
        <dbReference type="Rhea" id="RHEA:19877"/>
        <dbReference type="ChEBI" id="CHEBI:15378"/>
        <dbReference type="ChEBI" id="CHEBI:30616"/>
        <dbReference type="ChEBI" id="CHEBI:57880"/>
        <dbReference type="ChEBI" id="CHEBI:58178"/>
        <dbReference type="ChEBI" id="CHEBI:456216"/>
        <dbReference type="EC" id="2.7.1.67"/>
    </reaction>
</comment>
<comment type="subcellular location">
    <subcellularLocation>
        <location evidence="4">Golgi apparatus</location>
        <location evidence="4">trans-Golgi network membrane</location>
        <topology evidence="4">Lipid-anchor</topology>
    </subcellularLocation>
    <subcellularLocation>
        <location evidence="4">Membrane raft</location>
    </subcellularLocation>
    <subcellularLocation>
        <location evidence="3">Endosome</location>
    </subcellularLocation>
    <subcellularLocation>
        <location evidence="3">Cytoplasmic vesicle</location>
    </subcellularLocation>
    <subcellularLocation>
        <location evidence="2">Cell projection</location>
        <location evidence="2">Dendrite</location>
    </subcellularLocation>
    <subcellularLocation>
        <location evidence="2">Presynaptic cell membrane</location>
    </subcellularLocation>
    <subcellularLocation>
        <location evidence="2">Synapse</location>
        <location evidence="2">Synaptosome</location>
    </subcellularLocation>
    <subcellularLocation>
        <location evidence="2">Mitochondrion</location>
    </subcellularLocation>
    <subcellularLocation>
        <location evidence="2">Membrane</location>
    </subcellularLocation>
    <subcellularLocation>
        <location evidence="4">Cell membrane</location>
    </subcellularLocation>
    <subcellularLocation>
        <location evidence="2">Perikaryon</location>
    </subcellularLocation>
    <subcellularLocation>
        <location evidence="2">Cell projection</location>
        <location evidence="2">Neuron projection</location>
    </subcellularLocation>
</comment>
<comment type="similarity">
    <text evidence="7">Belongs to the PI3/PI4-kinase family. Type II PI4K subfamily.</text>
</comment>